<sequence>MINVIANRYAEALFQLGEEENSTDVLFKELEKVVDMMTKVSKDFYKVLKSPLVSKSEKKNLVEIIFSKEVSSNIKNFLKVLVDKDRISYLEDIELAYKELLNKKNNVIDGVAISAIPMSETDIKELEVKLSNKYNKNVTIENVVDKTILGGVLVRIGNEQIDGTVKTRLDKMKEKLSEVIS</sequence>
<keyword id="KW-0066">ATP synthesis</keyword>
<keyword id="KW-1003">Cell membrane</keyword>
<keyword id="KW-0139">CF(1)</keyword>
<keyword id="KW-0375">Hydrogen ion transport</keyword>
<keyword id="KW-0406">Ion transport</keyword>
<keyword id="KW-0472">Membrane</keyword>
<keyword id="KW-1185">Reference proteome</keyword>
<keyword id="KW-0813">Transport</keyword>
<comment type="function">
    <text evidence="1">F(1)F(0) ATP synthase produces ATP from ADP in the presence of a proton or sodium gradient. F-type ATPases consist of two structural domains, F(1) containing the extramembraneous catalytic core and F(0) containing the membrane proton channel, linked together by a central stalk and a peripheral stalk. During catalysis, ATP synthesis in the catalytic domain of F(1) is coupled via a rotary mechanism of the central stalk subunits to proton translocation.</text>
</comment>
<comment type="function">
    <text evidence="1">This protein is part of the stalk that links CF(0) to CF(1). It either transmits conformational changes from CF(0) to CF(1) or is implicated in proton conduction.</text>
</comment>
<comment type="subunit">
    <text evidence="1">F-type ATPases have 2 components, F(1) - the catalytic core - and F(0) - the membrane proton channel. F(1) has five subunits: alpha(3), beta(3), gamma(1), delta(1), epsilon(1). F(0) has three main subunits: a(1), b(2) and c(10-14). The alpha and beta chains form an alternating ring which encloses part of the gamma chain. F(1) is attached to F(0) by a central stalk formed by the gamma and epsilon chains, while a peripheral stalk is formed by the delta and b chains.</text>
</comment>
<comment type="subcellular location">
    <subcellularLocation>
        <location evidence="1">Cell membrane</location>
        <topology evidence="1">Peripheral membrane protein</topology>
    </subcellularLocation>
</comment>
<comment type="similarity">
    <text evidence="1">Belongs to the ATPase delta chain family.</text>
</comment>
<feature type="chain" id="PRO_0000370947" description="ATP synthase subunit delta">
    <location>
        <begin position="1"/>
        <end position="181"/>
    </location>
</feature>
<dbReference type="EMBL" id="AM180355">
    <property type="protein sequence ID" value="CAJ70374.1"/>
    <property type="molecule type" value="Genomic_DNA"/>
</dbReference>
<dbReference type="RefSeq" id="WP_003425856.1">
    <property type="nucleotide sequence ID" value="NZ_JAUPES010000009.1"/>
</dbReference>
<dbReference type="RefSeq" id="YP_001089991.1">
    <property type="nucleotide sequence ID" value="NC_009089.1"/>
</dbReference>
<dbReference type="SMR" id="Q180W9"/>
<dbReference type="STRING" id="272563.CD630_34710"/>
<dbReference type="EnsemblBacteria" id="CAJ70374">
    <property type="protein sequence ID" value="CAJ70374"/>
    <property type="gene ID" value="CD630_34710"/>
</dbReference>
<dbReference type="KEGG" id="cdf:CD630_34710"/>
<dbReference type="KEGG" id="pdc:CDIF630_03782"/>
<dbReference type="PATRIC" id="fig|272563.120.peg.3668"/>
<dbReference type="eggNOG" id="COG0712">
    <property type="taxonomic scope" value="Bacteria"/>
</dbReference>
<dbReference type="OrthoDB" id="9802471at2"/>
<dbReference type="PhylomeDB" id="Q180W9"/>
<dbReference type="BioCyc" id="PDIF272563:G12WB-3651-MONOMER"/>
<dbReference type="Proteomes" id="UP000001978">
    <property type="component" value="Chromosome"/>
</dbReference>
<dbReference type="GO" id="GO:0005886">
    <property type="term" value="C:plasma membrane"/>
    <property type="evidence" value="ECO:0007669"/>
    <property type="project" value="UniProtKB-SubCell"/>
</dbReference>
<dbReference type="GO" id="GO:0045259">
    <property type="term" value="C:proton-transporting ATP synthase complex"/>
    <property type="evidence" value="ECO:0007669"/>
    <property type="project" value="UniProtKB-KW"/>
</dbReference>
<dbReference type="GO" id="GO:0046933">
    <property type="term" value="F:proton-transporting ATP synthase activity, rotational mechanism"/>
    <property type="evidence" value="ECO:0007669"/>
    <property type="project" value="UniProtKB-UniRule"/>
</dbReference>
<dbReference type="Gene3D" id="1.10.520.20">
    <property type="entry name" value="N-terminal domain of the delta subunit of the F1F0-ATP synthase"/>
    <property type="match status" value="1"/>
</dbReference>
<dbReference type="HAMAP" id="MF_01416">
    <property type="entry name" value="ATP_synth_delta_bact"/>
    <property type="match status" value="1"/>
</dbReference>
<dbReference type="InterPro" id="IPR026015">
    <property type="entry name" value="ATP_synth_OSCP/delta_N_sf"/>
</dbReference>
<dbReference type="InterPro" id="IPR020781">
    <property type="entry name" value="ATPase_OSCP/d_CS"/>
</dbReference>
<dbReference type="InterPro" id="IPR000711">
    <property type="entry name" value="ATPase_OSCP/dsu"/>
</dbReference>
<dbReference type="NCBIfam" id="TIGR01145">
    <property type="entry name" value="ATP_synt_delta"/>
    <property type="match status" value="1"/>
</dbReference>
<dbReference type="NCBIfam" id="NF004403">
    <property type="entry name" value="PRK05758.2-4"/>
    <property type="match status" value="1"/>
</dbReference>
<dbReference type="PANTHER" id="PTHR11910">
    <property type="entry name" value="ATP SYNTHASE DELTA CHAIN"/>
    <property type="match status" value="1"/>
</dbReference>
<dbReference type="Pfam" id="PF00213">
    <property type="entry name" value="OSCP"/>
    <property type="match status" value="1"/>
</dbReference>
<dbReference type="PRINTS" id="PR00125">
    <property type="entry name" value="ATPASEDELTA"/>
</dbReference>
<dbReference type="SUPFAM" id="SSF47928">
    <property type="entry name" value="N-terminal domain of the delta subunit of the F1F0-ATP synthase"/>
    <property type="match status" value="1"/>
</dbReference>
<dbReference type="PROSITE" id="PS00389">
    <property type="entry name" value="ATPASE_DELTA"/>
    <property type="match status" value="1"/>
</dbReference>
<organism>
    <name type="scientific">Clostridioides difficile (strain 630)</name>
    <name type="common">Peptoclostridium difficile</name>
    <dbReference type="NCBI Taxonomy" id="272563"/>
    <lineage>
        <taxon>Bacteria</taxon>
        <taxon>Bacillati</taxon>
        <taxon>Bacillota</taxon>
        <taxon>Clostridia</taxon>
        <taxon>Peptostreptococcales</taxon>
        <taxon>Peptostreptococcaceae</taxon>
        <taxon>Clostridioides</taxon>
    </lineage>
</organism>
<accession>Q180W9</accession>
<gene>
    <name evidence="1" type="primary">atpH</name>
    <name type="ordered locus">CD630_34710</name>
</gene>
<proteinExistence type="inferred from homology"/>
<evidence type="ECO:0000255" key="1">
    <source>
        <dbReference type="HAMAP-Rule" id="MF_01416"/>
    </source>
</evidence>
<protein>
    <recommendedName>
        <fullName evidence="1">ATP synthase subunit delta</fullName>
    </recommendedName>
    <alternativeName>
        <fullName evidence="1">ATP synthase F(1) sector subunit delta</fullName>
    </alternativeName>
    <alternativeName>
        <fullName evidence="1">F-type ATPase subunit delta</fullName>
        <shortName evidence="1">F-ATPase subunit delta</shortName>
    </alternativeName>
</protein>
<name>ATPD_CLOD6</name>
<reference key="1">
    <citation type="journal article" date="2006" name="Nat. Genet.">
        <title>The multidrug-resistant human pathogen Clostridium difficile has a highly mobile, mosaic genome.</title>
        <authorList>
            <person name="Sebaihia M."/>
            <person name="Wren B.W."/>
            <person name="Mullany P."/>
            <person name="Fairweather N.F."/>
            <person name="Minton N."/>
            <person name="Stabler R."/>
            <person name="Thomson N.R."/>
            <person name="Roberts A.P."/>
            <person name="Cerdeno-Tarraga A.M."/>
            <person name="Wang H."/>
            <person name="Holden M.T.G."/>
            <person name="Wright A."/>
            <person name="Churcher C."/>
            <person name="Quail M.A."/>
            <person name="Baker S."/>
            <person name="Bason N."/>
            <person name="Brooks K."/>
            <person name="Chillingworth T."/>
            <person name="Cronin A."/>
            <person name="Davis P."/>
            <person name="Dowd L."/>
            <person name="Fraser A."/>
            <person name="Feltwell T."/>
            <person name="Hance Z."/>
            <person name="Holroyd S."/>
            <person name="Jagels K."/>
            <person name="Moule S."/>
            <person name="Mungall K."/>
            <person name="Price C."/>
            <person name="Rabbinowitsch E."/>
            <person name="Sharp S."/>
            <person name="Simmonds M."/>
            <person name="Stevens K."/>
            <person name="Unwin L."/>
            <person name="Whithead S."/>
            <person name="Dupuy B."/>
            <person name="Dougan G."/>
            <person name="Barrell B."/>
            <person name="Parkhill J."/>
        </authorList>
    </citation>
    <scope>NUCLEOTIDE SEQUENCE [LARGE SCALE GENOMIC DNA]</scope>
    <source>
        <strain>630</strain>
    </source>
</reference>